<dbReference type="EC" id="3.1.1.29" evidence="1"/>
<dbReference type="EMBL" id="CP000742">
    <property type="protein sequence ID" value="ABR55375.1"/>
    <property type="molecule type" value="Genomic_DNA"/>
</dbReference>
<dbReference type="RefSeq" id="WP_012066289.1">
    <property type="nucleotide sequence ID" value="NC_009634.1"/>
</dbReference>
<dbReference type="SMR" id="A6USA3"/>
<dbReference type="STRING" id="406327.Mevan_1481"/>
<dbReference type="GeneID" id="5324811"/>
<dbReference type="KEGG" id="mvn:Mevan_1481"/>
<dbReference type="eggNOG" id="arCOG04228">
    <property type="taxonomic scope" value="Archaea"/>
</dbReference>
<dbReference type="HOGENOM" id="CLU_073661_2_2_2"/>
<dbReference type="OrthoDB" id="6075at2157"/>
<dbReference type="Proteomes" id="UP000001107">
    <property type="component" value="Chromosome"/>
</dbReference>
<dbReference type="GO" id="GO:0005829">
    <property type="term" value="C:cytosol"/>
    <property type="evidence" value="ECO:0007669"/>
    <property type="project" value="TreeGrafter"/>
</dbReference>
<dbReference type="GO" id="GO:0004045">
    <property type="term" value="F:peptidyl-tRNA hydrolase activity"/>
    <property type="evidence" value="ECO:0007669"/>
    <property type="project" value="UniProtKB-UniRule"/>
</dbReference>
<dbReference type="GO" id="GO:0006412">
    <property type="term" value="P:translation"/>
    <property type="evidence" value="ECO:0007669"/>
    <property type="project" value="UniProtKB-UniRule"/>
</dbReference>
<dbReference type="CDD" id="cd02430">
    <property type="entry name" value="PTH2"/>
    <property type="match status" value="1"/>
</dbReference>
<dbReference type="FunFam" id="3.40.1490.10:FF:000001">
    <property type="entry name" value="Peptidyl-tRNA hydrolase 2"/>
    <property type="match status" value="1"/>
</dbReference>
<dbReference type="Gene3D" id="3.40.1490.10">
    <property type="entry name" value="Bit1"/>
    <property type="match status" value="1"/>
</dbReference>
<dbReference type="HAMAP" id="MF_00628">
    <property type="entry name" value="Pept_tRNA_hydro_arch"/>
    <property type="match status" value="1"/>
</dbReference>
<dbReference type="InterPro" id="IPR023476">
    <property type="entry name" value="Pep_tRNA_hydro_II_dom_sf"/>
</dbReference>
<dbReference type="InterPro" id="IPR034759">
    <property type="entry name" value="Pept_tRNA_hydro_arch"/>
</dbReference>
<dbReference type="InterPro" id="IPR002833">
    <property type="entry name" value="PTH2"/>
</dbReference>
<dbReference type="NCBIfam" id="TIGR00283">
    <property type="entry name" value="arch_pth2"/>
    <property type="match status" value="1"/>
</dbReference>
<dbReference type="NCBIfam" id="NF003314">
    <property type="entry name" value="PRK04322.1"/>
    <property type="match status" value="1"/>
</dbReference>
<dbReference type="PANTHER" id="PTHR12649">
    <property type="entry name" value="PEPTIDYL-TRNA HYDROLASE 2"/>
    <property type="match status" value="1"/>
</dbReference>
<dbReference type="PANTHER" id="PTHR12649:SF11">
    <property type="entry name" value="PEPTIDYL-TRNA HYDROLASE 2, MITOCHONDRIAL"/>
    <property type="match status" value="1"/>
</dbReference>
<dbReference type="Pfam" id="PF01981">
    <property type="entry name" value="PTH2"/>
    <property type="match status" value="1"/>
</dbReference>
<dbReference type="SUPFAM" id="SSF102462">
    <property type="entry name" value="Peptidyl-tRNA hydrolase II"/>
    <property type="match status" value="1"/>
</dbReference>
<organism>
    <name type="scientific">Methanococcus vannielii (strain ATCC 35089 / DSM 1224 / JCM 13029 / OCM 148 / SB)</name>
    <dbReference type="NCBI Taxonomy" id="406327"/>
    <lineage>
        <taxon>Archaea</taxon>
        <taxon>Methanobacteriati</taxon>
        <taxon>Methanobacteriota</taxon>
        <taxon>Methanomada group</taxon>
        <taxon>Methanococci</taxon>
        <taxon>Methanococcales</taxon>
        <taxon>Methanococcaceae</taxon>
        <taxon>Methanococcus</taxon>
    </lineage>
</organism>
<protein>
    <recommendedName>
        <fullName evidence="1">Peptidyl-tRNA hydrolase</fullName>
        <shortName evidence="1">PTH</shortName>
        <ecNumber evidence="1">3.1.1.29</ecNumber>
    </recommendedName>
</protein>
<evidence type="ECO:0000255" key="1">
    <source>
        <dbReference type="HAMAP-Rule" id="MF_00628"/>
    </source>
</evidence>
<keyword id="KW-0963">Cytoplasm</keyword>
<keyword id="KW-0378">Hydrolase</keyword>
<feature type="chain" id="PRO_1000051680" description="Peptidyl-tRNA hydrolase">
    <location>
        <begin position="1"/>
        <end position="116"/>
    </location>
</feature>
<proteinExistence type="inferred from homology"/>
<comment type="function">
    <text evidence="1">The natural substrate for this enzyme may be peptidyl-tRNAs which drop off the ribosome during protein synthesis.</text>
</comment>
<comment type="catalytic activity">
    <reaction evidence="1">
        <text>an N-acyl-L-alpha-aminoacyl-tRNA + H2O = an N-acyl-L-amino acid + a tRNA + H(+)</text>
        <dbReference type="Rhea" id="RHEA:54448"/>
        <dbReference type="Rhea" id="RHEA-COMP:10123"/>
        <dbReference type="Rhea" id="RHEA-COMP:13883"/>
        <dbReference type="ChEBI" id="CHEBI:15377"/>
        <dbReference type="ChEBI" id="CHEBI:15378"/>
        <dbReference type="ChEBI" id="CHEBI:59874"/>
        <dbReference type="ChEBI" id="CHEBI:78442"/>
        <dbReference type="ChEBI" id="CHEBI:138191"/>
        <dbReference type="EC" id="3.1.1.29"/>
    </reaction>
</comment>
<comment type="subcellular location">
    <subcellularLocation>
        <location evidence="1">Cytoplasm</location>
    </subcellularLocation>
</comment>
<comment type="similarity">
    <text evidence="1">Belongs to the PTH2 family.</text>
</comment>
<accession>A6USA3</accession>
<sequence>MYEQAIVIRNDLKMGKGKMAAQACHASIQAYLHAQKISPSAVMYWMNEGQKKVVLKVNSEKELLEIFRDVNIDGLPCSLIRDAGKTQIEPGSLTAVGIGPEKEDKISKVTKNLKLL</sequence>
<name>PTH_METVS</name>
<reference key="1">
    <citation type="submission" date="2007-06" db="EMBL/GenBank/DDBJ databases">
        <title>Complete sequence of Methanococcus vannielii SB.</title>
        <authorList>
            <consortium name="US DOE Joint Genome Institute"/>
            <person name="Copeland A."/>
            <person name="Lucas S."/>
            <person name="Lapidus A."/>
            <person name="Barry K."/>
            <person name="Glavina del Rio T."/>
            <person name="Dalin E."/>
            <person name="Tice H."/>
            <person name="Pitluck S."/>
            <person name="Chain P."/>
            <person name="Malfatti S."/>
            <person name="Shin M."/>
            <person name="Vergez L."/>
            <person name="Schmutz J."/>
            <person name="Larimer F."/>
            <person name="Land M."/>
            <person name="Hauser L."/>
            <person name="Kyrpides N."/>
            <person name="Anderson I."/>
            <person name="Sieprawska-Lupa M."/>
            <person name="Whitman W.B."/>
            <person name="Richardson P."/>
        </authorList>
    </citation>
    <scope>NUCLEOTIDE SEQUENCE [LARGE SCALE GENOMIC DNA]</scope>
    <source>
        <strain>ATCC 35089 / DSM 1224 / JCM 13029 / OCM 148 / SB</strain>
    </source>
</reference>
<gene>
    <name evidence="1" type="primary">pth</name>
    <name type="ordered locus">Mevan_1481</name>
</gene>